<keyword id="KW-0256">Endoplasmic reticulum</keyword>
<keyword id="KW-0445">Lipid transport</keyword>
<keyword id="KW-0446">Lipid-binding</keyword>
<keyword id="KW-0472">Membrane</keyword>
<keyword id="KW-1185">Reference proteome</keyword>
<keyword id="KW-0812">Transmembrane</keyword>
<keyword id="KW-1133">Transmembrane helix</keyword>
<keyword id="KW-0813">Transport</keyword>
<reference key="1">
    <citation type="journal article" date="2011" name="PLoS Genet.">
        <title>Comparative genomic analysis of human fungal pathogens causing paracoccidioidomycosis.</title>
        <authorList>
            <person name="Desjardins C.A."/>
            <person name="Champion M.D."/>
            <person name="Holder J.W."/>
            <person name="Muszewska A."/>
            <person name="Goldberg J."/>
            <person name="Bailao A.M."/>
            <person name="Brigido M.M."/>
            <person name="Ferreira M.E."/>
            <person name="Garcia A.M."/>
            <person name="Grynberg M."/>
            <person name="Gujja S."/>
            <person name="Heiman D.I."/>
            <person name="Henn M.R."/>
            <person name="Kodira C.D."/>
            <person name="Leon-Narvaez H."/>
            <person name="Longo L.V.G."/>
            <person name="Ma L.-J."/>
            <person name="Malavazi I."/>
            <person name="Matsuo A.L."/>
            <person name="Morais F.V."/>
            <person name="Pereira M."/>
            <person name="Rodriguez-Brito S."/>
            <person name="Sakthikumar S."/>
            <person name="Salem-Izacc S.M."/>
            <person name="Sykes S.M."/>
            <person name="Teixeira M.M."/>
            <person name="Vallejo M.C."/>
            <person name="Walter M.E."/>
            <person name="Yandava C."/>
            <person name="Young S."/>
            <person name="Zeng Q."/>
            <person name="Zucker J."/>
            <person name="Felipe M.S."/>
            <person name="Goldman G.H."/>
            <person name="Haas B.J."/>
            <person name="McEwen J.G."/>
            <person name="Nino-Vega G."/>
            <person name="Puccia R."/>
            <person name="San-Blas G."/>
            <person name="Soares C.M."/>
            <person name="Birren B.W."/>
            <person name="Cuomo C.A."/>
        </authorList>
    </citation>
    <scope>NUCLEOTIDE SEQUENCE [LARGE SCALE GENOMIC DNA]</scope>
    <source>
        <strain>Pb18</strain>
    </source>
</reference>
<protein>
    <recommendedName>
        <fullName evidence="1">Maintenance of mitochondrial morphology protein 1</fullName>
    </recommendedName>
</protein>
<dbReference type="EMBL" id="KN275964">
    <property type="protein sequence ID" value="EEH50174.2"/>
    <property type="molecule type" value="Genomic_DNA"/>
</dbReference>
<dbReference type="RefSeq" id="XP_010761665.1">
    <property type="nucleotide sequence ID" value="XM_010763363.1"/>
</dbReference>
<dbReference type="SMR" id="C1GG16"/>
<dbReference type="FunCoup" id="C1GG16">
    <property type="interactions" value="62"/>
</dbReference>
<dbReference type="STRING" id="502780.C1GG16"/>
<dbReference type="GeneID" id="22585021"/>
<dbReference type="KEGG" id="pbn:PADG_06253"/>
<dbReference type="VEuPathDB" id="FungiDB:PADG_06253"/>
<dbReference type="eggNOG" id="ENOG502QUUW">
    <property type="taxonomic scope" value="Eukaryota"/>
</dbReference>
<dbReference type="HOGENOM" id="CLU_032730_2_0_1"/>
<dbReference type="InParanoid" id="C1GG16"/>
<dbReference type="OMA" id="NIWPRMG"/>
<dbReference type="OrthoDB" id="21185at33183"/>
<dbReference type="Proteomes" id="UP000001628">
    <property type="component" value="Unassembled WGS sequence"/>
</dbReference>
<dbReference type="GO" id="GO:0005789">
    <property type="term" value="C:endoplasmic reticulum membrane"/>
    <property type="evidence" value="ECO:0007669"/>
    <property type="project" value="UniProtKB-SubCell"/>
</dbReference>
<dbReference type="GO" id="GO:0032865">
    <property type="term" value="C:ERMES complex"/>
    <property type="evidence" value="ECO:0007669"/>
    <property type="project" value="UniProtKB-UniRule"/>
</dbReference>
<dbReference type="GO" id="GO:0008289">
    <property type="term" value="F:lipid binding"/>
    <property type="evidence" value="ECO:0007669"/>
    <property type="project" value="UniProtKB-KW"/>
</dbReference>
<dbReference type="GO" id="GO:0000002">
    <property type="term" value="P:mitochondrial genome maintenance"/>
    <property type="evidence" value="ECO:0007669"/>
    <property type="project" value="UniProtKB-UniRule"/>
</dbReference>
<dbReference type="GO" id="GO:1990456">
    <property type="term" value="P:mitochondrion-endoplasmic reticulum membrane tethering"/>
    <property type="evidence" value="ECO:0007669"/>
    <property type="project" value="TreeGrafter"/>
</dbReference>
<dbReference type="GO" id="GO:0015914">
    <property type="term" value="P:phospholipid transport"/>
    <property type="evidence" value="ECO:0007669"/>
    <property type="project" value="TreeGrafter"/>
</dbReference>
<dbReference type="GO" id="GO:0045040">
    <property type="term" value="P:protein insertion into mitochondrial outer membrane"/>
    <property type="evidence" value="ECO:0007669"/>
    <property type="project" value="UniProtKB-UniRule"/>
</dbReference>
<dbReference type="CDD" id="cd21671">
    <property type="entry name" value="SMP_Mmm1"/>
    <property type="match status" value="1"/>
</dbReference>
<dbReference type="HAMAP" id="MF_03103">
    <property type="entry name" value="Mmm1"/>
    <property type="match status" value="1"/>
</dbReference>
<dbReference type="InterPro" id="IPR027537">
    <property type="entry name" value="Mmm1"/>
</dbReference>
<dbReference type="InterPro" id="IPR019411">
    <property type="entry name" value="MMM1_dom"/>
</dbReference>
<dbReference type="InterPro" id="IPR031468">
    <property type="entry name" value="SMP_LBD"/>
</dbReference>
<dbReference type="PANTHER" id="PTHR13466:SF0">
    <property type="entry name" value="SMP-LTD DOMAIN-CONTAINING PROTEIN"/>
    <property type="match status" value="1"/>
</dbReference>
<dbReference type="PANTHER" id="PTHR13466">
    <property type="entry name" value="TEX2 PROTEIN-RELATED"/>
    <property type="match status" value="1"/>
</dbReference>
<dbReference type="Pfam" id="PF10296">
    <property type="entry name" value="MMM1"/>
    <property type="match status" value="1"/>
</dbReference>
<dbReference type="PROSITE" id="PS51847">
    <property type="entry name" value="SMP"/>
    <property type="match status" value="1"/>
</dbReference>
<comment type="function">
    <text evidence="1">Component of the ERMES/MDM complex, which serves as a molecular tether to connect the endoplasmic reticulum (ER) and mitochondria. Components of this complex are involved in the control of mitochondrial shape and protein biogenesis, and function in nonvesicular lipid trafficking between the ER and mitochondria. The MDM12-MMM1 subcomplex functions in the major beta-barrel assembly pathway that is responsible for biogenesis of all outer membrane beta-barrel proteins, and acts in a late step after the SAM complex. The MDM10-MDM12-MMM1 subcomplex further acts in the TOM40-specific pathway after the action of the MDM12-MMM1 complex. Essential for establishing and maintaining the structure of mitochondria and maintenance of mtDNA nucleoids.</text>
</comment>
<comment type="subunit">
    <text evidence="1">Homodimer. Component of the ER-mitochondria encounter structure (ERMES) or MDM complex, composed of MMM1, MDM10, MDM12 and MDM34. A MMM1 homodimer associates with one molecule of MDM12 on each side in a pairwise head-to-tail manner, and the SMP-LTD domains of MMM1 and MDM12 generate a continuous hydrophobic tunnel for phospholipid trafficking.</text>
</comment>
<comment type="subcellular location">
    <subcellularLocation>
        <location evidence="1">Endoplasmic reticulum membrane</location>
        <topology evidence="1">Single-pass type I membrane protein</topology>
    </subcellularLocation>
    <text evidence="1">The ERMES/MDM complex localizes to a few discrete foci (around 10 per single cell), that represent mitochondria-endoplasmic reticulum junctions. These foci are often found next to mtDNA nucleoids.</text>
</comment>
<comment type="domain">
    <text evidence="1">The SMP-LTD domain is a barrel-like domain that can bind various types of glycerophospholipids in its interior and mediate their transfer between two adjacent bilayers.</text>
</comment>
<comment type="similarity">
    <text evidence="1">Belongs to the MMM1 family.</text>
</comment>
<organism>
    <name type="scientific">Paracoccidioides brasiliensis (strain Pb18)</name>
    <dbReference type="NCBI Taxonomy" id="502780"/>
    <lineage>
        <taxon>Eukaryota</taxon>
        <taxon>Fungi</taxon>
        <taxon>Dikarya</taxon>
        <taxon>Ascomycota</taxon>
        <taxon>Pezizomycotina</taxon>
        <taxon>Eurotiomycetes</taxon>
        <taxon>Eurotiomycetidae</taxon>
        <taxon>Onygenales</taxon>
        <taxon>Ajellomycetaceae</taxon>
        <taxon>Paracoccidioides</taxon>
    </lineage>
</organism>
<proteinExistence type="inferred from homology"/>
<accession>C1GG16</accession>
<gene>
    <name evidence="1" type="primary">MMM1</name>
    <name type="ORF">PADG_06253</name>
</gene>
<feature type="chain" id="PRO_0000384242" description="Maintenance of mitochondrial morphology protein 1">
    <location>
        <begin position="1"/>
        <end position="516"/>
    </location>
</feature>
<feature type="topological domain" description="Lumenal" evidence="1">
    <location>
        <begin position="1"/>
        <end position="43"/>
    </location>
</feature>
<feature type="transmembrane region" description="Helical" evidence="1">
    <location>
        <begin position="44"/>
        <end position="64"/>
    </location>
</feature>
<feature type="topological domain" description="Cytoplasmic" evidence="1">
    <location>
        <begin position="65"/>
        <end position="516"/>
    </location>
</feature>
<feature type="domain" description="SMP-LTD" evidence="1">
    <location>
        <begin position="151"/>
        <end position="412"/>
    </location>
</feature>
<feature type="region of interest" description="Disordered" evidence="2">
    <location>
        <begin position="70"/>
        <end position="118"/>
    </location>
</feature>
<feature type="region of interest" description="Disordered" evidence="2">
    <location>
        <begin position="295"/>
        <end position="349"/>
    </location>
</feature>
<feature type="region of interest" description="Disordered" evidence="2">
    <location>
        <begin position="420"/>
        <end position="466"/>
    </location>
</feature>
<feature type="region of interest" description="Disordered" evidence="2">
    <location>
        <begin position="485"/>
        <end position="516"/>
    </location>
</feature>
<feature type="compositionally biased region" description="Polar residues" evidence="2">
    <location>
        <begin position="74"/>
        <end position="96"/>
    </location>
</feature>
<feature type="compositionally biased region" description="Polar residues" evidence="2">
    <location>
        <begin position="105"/>
        <end position="118"/>
    </location>
</feature>
<feature type="compositionally biased region" description="Polar residues" evidence="2">
    <location>
        <begin position="295"/>
        <end position="312"/>
    </location>
</feature>
<feature type="compositionally biased region" description="Gly residues" evidence="2">
    <location>
        <begin position="449"/>
        <end position="460"/>
    </location>
</feature>
<sequence length="516" mass="55413">MAGSTSASLQTPYFPSSTQINPVRVDHTLPLPPAQPSLSFTQGLLVGQLSVVLLIGAFIKFFIFGEAPPPPSRGLSNRTSTHPRSYSINAASTDSSPRLLREKPSTSNILRPVPSSSTNTRSILRKTYYSATPTHPTPKHGRPRLYHSSHQPESLDWFNVLIAQTIAQYRQTAYILKDSPTSSILASLSETLNNPEKKPSFIDIIKVTDISLGEEFPIFSNCRVIAVEDPNSDGGRLQALMDVDLSDDNLSLAIETSLLLNYPKPFSAVLPVALAVSVVRFSGTLCISFVPGPRTSDQTMSPIPTPHDTTSEAIDDQSSDQSSPAQNPDGPKDAHANTSNTTDASSKHGIPKTSLAFSFLPDYRLDLSVRSLIGSRSRLQDVPKVAQLVEARVQSWFEERVVEPRVQVVGLPNIWPRMGRTGLRSSQEEPEAGSGSVEIPVMTSPGTDGVSGGGGGGGSMRGIDRGLSGREVGYEALRFRHAACGGHQNQSGRDGGRGGNEQFAMPGSMPDTVTET</sequence>
<evidence type="ECO:0000255" key="1">
    <source>
        <dbReference type="HAMAP-Rule" id="MF_03103"/>
    </source>
</evidence>
<evidence type="ECO:0000256" key="2">
    <source>
        <dbReference type="SAM" id="MobiDB-lite"/>
    </source>
</evidence>
<name>MMM1_PARBD</name>